<proteinExistence type="evidence at transcript level"/>
<name>CASQ2_PIG</name>
<protein>
    <recommendedName>
        <fullName>Calsequestrin-2</fullName>
    </recommendedName>
    <alternativeName>
        <fullName>Calsequestrin, cardiac muscle isoform</fullName>
    </alternativeName>
</protein>
<dbReference type="EMBL" id="AF034612">
    <property type="protein sequence ID" value="AAB87570.1"/>
    <property type="molecule type" value="mRNA"/>
</dbReference>
<dbReference type="SMR" id="O18934"/>
<dbReference type="STRING" id="9823.ENSSSCP00000007195"/>
<dbReference type="PaxDb" id="9823-ENSSSCP00000007195"/>
<dbReference type="PeptideAtlas" id="O18934"/>
<dbReference type="eggNOG" id="ENOG502QU4Q">
    <property type="taxonomic scope" value="Eukaryota"/>
</dbReference>
<dbReference type="HOGENOM" id="CLU_036303_1_0_1"/>
<dbReference type="InParanoid" id="O18934"/>
<dbReference type="Proteomes" id="UP000008227">
    <property type="component" value="Unplaced"/>
</dbReference>
<dbReference type="Proteomes" id="UP000314985">
    <property type="component" value="Unplaced"/>
</dbReference>
<dbReference type="Proteomes" id="UP000694570">
    <property type="component" value="Unplaced"/>
</dbReference>
<dbReference type="Proteomes" id="UP000694571">
    <property type="component" value="Unplaced"/>
</dbReference>
<dbReference type="Proteomes" id="UP000694720">
    <property type="component" value="Unplaced"/>
</dbReference>
<dbReference type="Proteomes" id="UP000694722">
    <property type="component" value="Unplaced"/>
</dbReference>
<dbReference type="Proteomes" id="UP000694723">
    <property type="component" value="Unplaced"/>
</dbReference>
<dbReference type="Proteomes" id="UP000694724">
    <property type="component" value="Unplaced"/>
</dbReference>
<dbReference type="Proteomes" id="UP000694725">
    <property type="component" value="Unplaced"/>
</dbReference>
<dbReference type="Proteomes" id="UP000694726">
    <property type="component" value="Unplaced"/>
</dbReference>
<dbReference type="Proteomes" id="UP000694727">
    <property type="component" value="Unplaced"/>
</dbReference>
<dbReference type="Proteomes" id="UP000694728">
    <property type="component" value="Unplaced"/>
</dbReference>
<dbReference type="GO" id="GO:0005737">
    <property type="term" value="C:cytoplasm"/>
    <property type="evidence" value="ECO:0000314"/>
    <property type="project" value="BHF-UCL"/>
</dbReference>
<dbReference type="GO" id="GO:0033018">
    <property type="term" value="C:sarcoplasmic reticulum lumen"/>
    <property type="evidence" value="ECO:0000318"/>
    <property type="project" value="GO_Central"/>
</dbReference>
<dbReference type="GO" id="GO:0030018">
    <property type="term" value="C:Z disc"/>
    <property type="evidence" value="ECO:0000318"/>
    <property type="project" value="GO_Central"/>
</dbReference>
<dbReference type="GO" id="GO:0005509">
    <property type="term" value="F:calcium ion binding"/>
    <property type="evidence" value="ECO:0000318"/>
    <property type="project" value="GO_Central"/>
</dbReference>
<dbReference type="GO" id="GO:0010881">
    <property type="term" value="P:regulation of cardiac muscle contraction by regulation of the release of sequestered calcium ion"/>
    <property type="evidence" value="ECO:0000318"/>
    <property type="project" value="GO_Central"/>
</dbReference>
<dbReference type="CDD" id="cd03066">
    <property type="entry name" value="PDI_b_Calsequestrin_middle"/>
    <property type="match status" value="1"/>
</dbReference>
<dbReference type="FunFam" id="3.40.30.10:FF:000033">
    <property type="entry name" value="Calsequestrin"/>
    <property type="match status" value="1"/>
</dbReference>
<dbReference type="Gene3D" id="3.40.30.10">
    <property type="entry name" value="Glutaredoxin"/>
    <property type="match status" value="2"/>
</dbReference>
<dbReference type="InterPro" id="IPR001393">
    <property type="entry name" value="Calsequestrin"/>
</dbReference>
<dbReference type="InterPro" id="IPR041858">
    <property type="entry name" value="Calsequestrin_middle_dom"/>
</dbReference>
<dbReference type="InterPro" id="IPR036249">
    <property type="entry name" value="Thioredoxin-like_sf"/>
</dbReference>
<dbReference type="PANTHER" id="PTHR10033">
    <property type="entry name" value="CALSEQUESTRIN"/>
    <property type="match status" value="1"/>
</dbReference>
<dbReference type="PANTHER" id="PTHR10033:SF15">
    <property type="entry name" value="CALSEQUESTRIN-2"/>
    <property type="match status" value="1"/>
</dbReference>
<dbReference type="Pfam" id="PF01216">
    <property type="entry name" value="Calsequestrin"/>
    <property type="match status" value="1"/>
</dbReference>
<dbReference type="PRINTS" id="PR00312">
    <property type="entry name" value="CALSEQUESTRN"/>
</dbReference>
<dbReference type="SUPFAM" id="SSF52833">
    <property type="entry name" value="Thioredoxin-like"/>
    <property type="match status" value="1"/>
</dbReference>
<organism>
    <name type="scientific">Sus scrofa</name>
    <name type="common">Pig</name>
    <dbReference type="NCBI Taxonomy" id="9823"/>
    <lineage>
        <taxon>Eukaryota</taxon>
        <taxon>Metazoa</taxon>
        <taxon>Chordata</taxon>
        <taxon>Craniata</taxon>
        <taxon>Vertebrata</taxon>
        <taxon>Euteleostomi</taxon>
        <taxon>Mammalia</taxon>
        <taxon>Eutheria</taxon>
        <taxon>Laurasiatheria</taxon>
        <taxon>Artiodactyla</taxon>
        <taxon>Suina</taxon>
        <taxon>Suidae</taxon>
        <taxon>Sus</taxon>
    </lineage>
</organism>
<feature type="chain" id="PRO_0000144073" description="Calsequestrin-2">
    <location>
        <begin position="1" status="less than"/>
        <end position="160" status="greater than"/>
    </location>
</feature>
<feature type="non-terminal residue">
    <location>
        <position position="1"/>
    </location>
</feature>
<feature type="non-terminal residue">
    <location>
        <position position="160"/>
    </location>
</feature>
<comment type="function">
    <text evidence="2">Calsequestrin is a high-capacity, moderate affinity, calcium-binding protein and thus acts as an internal calcium store in muscle. Calcium ions are bound by clusters of acidic residues at the protein surface, especially at the interface between subunits. Can bind around 60 Ca(2+) ions. Regulates the release of lumenal Ca(2+) via the calcium release channel RYR2; this plays an important role in triggering muscle contraction. Plays a role in excitation-contraction coupling in the heart and in regulating the rate of heart beats.</text>
</comment>
<comment type="subunit">
    <text evidence="2">Monomer, homodimer and homooligomer. Mostly monomeric in the absence of calcium. Forms higher oligomers in a calcium-dependent manner. Dimers associate to form tetramers, that then form linear homomer chains. Interacts with ASPH and TRDN (By similarity).</text>
</comment>
<comment type="subcellular location">
    <subcellularLocation>
        <location evidence="1">Sarcoplasmic reticulum lumen</location>
    </subcellularLocation>
    <text evidence="1">This isoform of calsequestrin occurs in the sarcoplasmic reticulum's terminal cisternae luminal spaces of cardiac and slow skeletal muscle cells.</text>
</comment>
<comment type="PTM">
    <text evidence="2">Phosphorylation in the C-terminus, probably by CK2, moderately increases calcium buffering capacity.</text>
</comment>
<comment type="PTM">
    <text evidence="2">N-glycosylated.</text>
</comment>
<comment type="similarity">
    <text evidence="3">Belongs to the calsequestrin family.</text>
</comment>
<keyword id="KW-0106">Calcium</keyword>
<keyword id="KW-0479">Metal-binding</keyword>
<keyword id="KW-0514">Muscle protein</keyword>
<keyword id="KW-0597">Phosphoprotein</keyword>
<keyword id="KW-1185">Reference proteome</keyword>
<keyword id="KW-0703">Sarcoplasmic reticulum</keyword>
<accession>O18934</accession>
<evidence type="ECO:0000250" key="1">
    <source>
        <dbReference type="UniProtKB" id="O09161"/>
    </source>
</evidence>
<evidence type="ECO:0000250" key="2">
    <source>
        <dbReference type="UniProtKB" id="O14958"/>
    </source>
</evidence>
<evidence type="ECO:0000305" key="3"/>
<gene>
    <name type="primary">CASQ2</name>
</gene>
<sequence>FNEEGSLYILKGDRTIEFDGEFAADVLVEFLLDLIEDPVEIINSKLEVQAFERIEDHIKLIGFFKSEDSEYYKAFEEAAEHFQPYIKFFATFDKGVAKKLSLKMNEVDFYEPFMEEPIVIPDKPYTEEEIVEFVKEHQRPTLRRLRPEDMFETWEDNLNG</sequence>
<reference key="1">
    <citation type="submission" date="1997-11" db="EMBL/GenBank/DDBJ databases">
        <authorList>
            <person name="Canty J.M."/>
            <person name="Young R.F."/>
            <person name="Fallavollita J.A."/>
        </authorList>
    </citation>
    <scope>NUCLEOTIDE SEQUENCE [MRNA]</scope>
</reference>